<keyword id="KW-0067">ATP-binding</keyword>
<keyword id="KW-0963">Cytoplasm</keyword>
<keyword id="KW-1015">Disulfide bond</keyword>
<keyword id="KW-0547">Nucleotide-binding</keyword>
<keyword id="KW-0694">RNA-binding</keyword>
<keyword id="KW-0808">Transferase</keyword>
<keyword id="KW-0819">tRNA processing</keyword>
<keyword id="KW-0820">tRNA-binding</keyword>
<name>MNMA_MICAN</name>
<proteinExistence type="inferred from homology"/>
<sequence>MGKVVVGLSGGVDSSVAAAALHAQGYDVIGLTLWLMKGKGQCCSEGMVDAAFICEQLGVPHHIVDSRELFQKEIIDYLVSGYEAGITPLPCSQCNKAVKFSPMLHYARETLQTDTIATGHYARIRFSPENNRYQLLRAVDQNKDQSYFLYDLTQDVLRGTLFPLGEQTKAETRRIAQEFGLKTADKPDSQDLCLIEAHGTMRSFLDKYIAVSEGDIVDLDGKVLGKHSGIHHYTIGQRKGIGIAAAEPLYVVKLDPVMNRVIVGNRESAVSAACLVGRMNWVSIAEPTTPIRAQVQVRYRSPAVPVNVIPLENNQVKLVFDQPQFSITPGQAAVIYEGEIVLGGGIISGATP</sequence>
<accession>B0JVR4</accession>
<comment type="function">
    <text evidence="1">Catalyzes the 2-thiolation of uridine at the wobble position (U34) of tRNA, leading to the formation of s(2)U34.</text>
</comment>
<comment type="catalytic activity">
    <reaction evidence="1">
        <text>S-sulfanyl-L-cysteinyl-[protein] + uridine(34) in tRNA + AH2 + ATP = 2-thiouridine(34) in tRNA + L-cysteinyl-[protein] + A + AMP + diphosphate + H(+)</text>
        <dbReference type="Rhea" id="RHEA:47032"/>
        <dbReference type="Rhea" id="RHEA-COMP:10131"/>
        <dbReference type="Rhea" id="RHEA-COMP:11726"/>
        <dbReference type="Rhea" id="RHEA-COMP:11727"/>
        <dbReference type="Rhea" id="RHEA-COMP:11728"/>
        <dbReference type="ChEBI" id="CHEBI:13193"/>
        <dbReference type="ChEBI" id="CHEBI:15378"/>
        <dbReference type="ChEBI" id="CHEBI:17499"/>
        <dbReference type="ChEBI" id="CHEBI:29950"/>
        <dbReference type="ChEBI" id="CHEBI:30616"/>
        <dbReference type="ChEBI" id="CHEBI:33019"/>
        <dbReference type="ChEBI" id="CHEBI:61963"/>
        <dbReference type="ChEBI" id="CHEBI:65315"/>
        <dbReference type="ChEBI" id="CHEBI:87170"/>
        <dbReference type="ChEBI" id="CHEBI:456215"/>
        <dbReference type="EC" id="2.8.1.13"/>
    </reaction>
</comment>
<comment type="subcellular location">
    <subcellularLocation>
        <location evidence="1">Cytoplasm</location>
    </subcellularLocation>
</comment>
<comment type="similarity">
    <text evidence="1">Belongs to the MnmA/TRMU family.</text>
</comment>
<dbReference type="EC" id="2.8.1.13" evidence="1"/>
<dbReference type="EMBL" id="AP009552">
    <property type="protein sequence ID" value="BAG04657.1"/>
    <property type="molecule type" value="Genomic_DNA"/>
</dbReference>
<dbReference type="RefSeq" id="WP_012267330.1">
    <property type="nucleotide sequence ID" value="NC_010296.1"/>
</dbReference>
<dbReference type="SMR" id="B0JVR4"/>
<dbReference type="STRING" id="449447.MAE_48350"/>
<dbReference type="PaxDb" id="449447-MAE_48350"/>
<dbReference type="EnsemblBacteria" id="BAG04657">
    <property type="protein sequence ID" value="BAG04657"/>
    <property type="gene ID" value="MAE_48350"/>
</dbReference>
<dbReference type="KEGG" id="mar:MAE_48350"/>
<dbReference type="PATRIC" id="fig|449447.4.peg.4406"/>
<dbReference type="eggNOG" id="COG0482">
    <property type="taxonomic scope" value="Bacteria"/>
</dbReference>
<dbReference type="HOGENOM" id="CLU_035188_0_0_3"/>
<dbReference type="BioCyc" id="MAER449447:MAE_RS21015-MONOMER"/>
<dbReference type="Proteomes" id="UP000001510">
    <property type="component" value="Chromosome"/>
</dbReference>
<dbReference type="GO" id="GO:0005737">
    <property type="term" value="C:cytoplasm"/>
    <property type="evidence" value="ECO:0007669"/>
    <property type="project" value="UniProtKB-SubCell"/>
</dbReference>
<dbReference type="GO" id="GO:0005524">
    <property type="term" value="F:ATP binding"/>
    <property type="evidence" value="ECO:0007669"/>
    <property type="project" value="UniProtKB-KW"/>
</dbReference>
<dbReference type="GO" id="GO:0000049">
    <property type="term" value="F:tRNA binding"/>
    <property type="evidence" value="ECO:0007669"/>
    <property type="project" value="UniProtKB-KW"/>
</dbReference>
<dbReference type="GO" id="GO:0103016">
    <property type="term" value="F:tRNA-uridine 2-sulfurtransferase activity"/>
    <property type="evidence" value="ECO:0007669"/>
    <property type="project" value="UniProtKB-EC"/>
</dbReference>
<dbReference type="GO" id="GO:0002143">
    <property type="term" value="P:tRNA wobble position uridine thiolation"/>
    <property type="evidence" value="ECO:0007669"/>
    <property type="project" value="TreeGrafter"/>
</dbReference>
<dbReference type="CDD" id="cd01998">
    <property type="entry name" value="MnmA_TRMU-like"/>
    <property type="match status" value="1"/>
</dbReference>
<dbReference type="FunFam" id="2.30.30.280:FF:000001">
    <property type="entry name" value="tRNA-specific 2-thiouridylase MnmA"/>
    <property type="match status" value="1"/>
</dbReference>
<dbReference type="FunFam" id="2.40.30.10:FF:000023">
    <property type="entry name" value="tRNA-specific 2-thiouridylase MnmA"/>
    <property type="match status" value="1"/>
</dbReference>
<dbReference type="FunFam" id="3.40.50.620:FF:000302">
    <property type="entry name" value="tRNA-specific 2-thiouridylase MnmA"/>
    <property type="match status" value="1"/>
</dbReference>
<dbReference type="Gene3D" id="2.30.30.280">
    <property type="entry name" value="Adenine nucleotide alpha hydrolases-like domains"/>
    <property type="match status" value="1"/>
</dbReference>
<dbReference type="Gene3D" id="3.40.50.620">
    <property type="entry name" value="HUPs"/>
    <property type="match status" value="1"/>
</dbReference>
<dbReference type="Gene3D" id="2.40.30.10">
    <property type="entry name" value="Translation factors"/>
    <property type="match status" value="1"/>
</dbReference>
<dbReference type="HAMAP" id="MF_00144">
    <property type="entry name" value="tRNA_thiouridyl_MnmA"/>
    <property type="match status" value="1"/>
</dbReference>
<dbReference type="InterPro" id="IPR004506">
    <property type="entry name" value="MnmA-like"/>
</dbReference>
<dbReference type="InterPro" id="IPR046885">
    <property type="entry name" value="MnmA-like_C"/>
</dbReference>
<dbReference type="InterPro" id="IPR046884">
    <property type="entry name" value="MnmA-like_central"/>
</dbReference>
<dbReference type="InterPro" id="IPR023382">
    <property type="entry name" value="MnmA-like_central_sf"/>
</dbReference>
<dbReference type="InterPro" id="IPR014729">
    <property type="entry name" value="Rossmann-like_a/b/a_fold"/>
</dbReference>
<dbReference type="NCBIfam" id="NF001138">
    <property type="entry name" value="PRK00143.1"/>
    <property type="match status" value="1"/>
</dbReference>
<dbReference type="NCBIfam" id="TIGR00420">
    <property type="entry name" value="trmU"/>
    <property type="match status" value="1"/>
</dbReference>
<dbReference type="PANTHER" id="PTHR11933:SF5">
    <property type="entry name" value="MITOCHONDRIAL TRNA-SPECIFIC 2-THIOURIDYLASE 1"/>
    <property type="match status" value="1"/>
</dbReference>
<dbReference type="PANTHER" id="PTHR11933">
    <property type="entry name" value="TRNA 5-METHYLAMINOMETHYL-2-THIOURIDYLATE -METHYLTRANSFERASE"/>
    <property type="match status" value="1"/>
</dbReference>
<dbReference type="Pfam" id="PF03054">
    <property type="entry name" value="tRNA_Me_trans"/>
    <property type="match status" value="1"/>
</dbReference>
<dbReference type="Pfam" id="PF20258">
    <property type="entry name" value="tRNA_Me_trans_C"/>
    <property type="match status" value="1"/>
</dbReference>
<dbReference type="Pfam" id="PF20259">
    <property type="entry name" value="tRNA_Me_trans_M"/>
    <property type="match status" value="1"/>
</dbReference>
<dbReference type="SUPFAM" id="SSF52402">
    <property type="entry name" value="Adenine nucleotide alpha hydrolases-like"/>
    <property type="match status" value="1"/>
</dbReference>
<feature type="chain" id="PRO_0000349701" description="tRNA-specific 2-thiouridylase MnmA">
    <location>
        <begin position="1"/>
        <end position="352"/>
    </location>
</feature>
<feature type="region of interest" description="Interaction with tRNA" evidence="1">
    <location>
        <begin position="143"/>
        <end position="145"/>
    </location>
</feature>
<feature type="region of interest" description="Interaction with tRNA" evidence="1">
    <location>
        <begin position="298"/>
        <end position="299"/>
    </location>
</feature>
<feature type="active site" description="Nucleophile" evidence="1">
    <location>
        <position position="94"/>
    </location>
</feature>
<feature type="active site" description="Cysteine persulfide intermediate" evidence="1">
    <location>
        <position position="193"/>
    </location>
</feature>
<feature type="binding site" evidence="1">
    <location>
        <begin position="7"/>
        <end position="14"/>
    </location>
    <ligand>
        <name>ATP</name>
        <dbReference type="ChEBI" id="CHEBI:30616"/>
    </ligand>
</feature>
<feature type="binding site" evidence="1">
    <location>
        <position position="33"/>
    </location>
    <ligand>
        <name>ATP</name>
        <dbReference type="ChEBI" id="CHEBI:30616"/>
    </ligand>
</feature>
<feature type="binding site" evidence="1">
    <location>
        <position position="119"/>
    </location>
    <ligand>
        <name>ATP</name>
        <dbReference type="ChEBI" id="CHEBI:30616"/>
    </ligand>
</feature>
<feature type="site" description="Interaction with tRNA" evidence="1">
    <location>
        <position position="120"/>
    </location>
</feature>
<feature type="site" description="Interaction with tRNA" evidence="1">
    <location>
        <position position="331"/>
    </location>
</feature>
<feature type="disulfide bond" description="Alternate" evidence="1">
    <location>
        <begin position="94"/>
        <end position="193"/>
    </location>
</feature>
<evidence type="ECO:0000255" key="1">
    <source>
        <dbReference type="HAMAP-Rule" id="MF_00144"/>
    </source>
</evidence>
<reference key="1">
    <citation type="journal article" date="2007" name="DNA Res.">
        <title>Complete genomic structure of the bloom-forming toxic cyanobacterium Microcystis aeruginosa NIES-843.</title>
        <authorList>
            <person name="Kaneko T."/>
            <person name="Nakajima N."/>
            <person name="Okamoto S."/>
            <person name="Suzuki I."/>
            <person name="Tanabe Y."/>
            <person name="Tamaoki M."/>
            <person name="Nakamura Y."/>
            <person name="Kasai F."/>
            <person name="Watanabe A."/>
            <person name="Kawashima K."/>
            <person name="Kishida Y."/>
            <person name="Ono A."/>
            <person name="Shimizu Y."/>
            <person name="Takahashi C."/>
            <person name="Minami C."/>
            <person name="Fujishiro T."/>
            <person name="Kohara M."/>
            <person name="Katoh M."/>
            <person name="Nakazaki N."/>
            <person name="Nakayama S."/>
            <person name="Yamada M."/>
            <person name="Tabata S."/>
            <person name="Watanabe M.M."/>
        </authorList>
    </citation>
    <scope>NUCLEOTIDE SEQUENCE [LARGE SCALE GENOMIC DNA]</scope>
    <source>
        <strain>NIES-843 / IAM M-247</strain>
    </source>
</reference>
<protein>
    <recommendedName>
        <fullName evidence="1">tRNA-specific 2-thiouridylase MnmA</fullName>
        <ecNumber evidence="1">2.8.1.13</ecNumber>
    </recommendedName>
</protein>
<organism>
    <name type="scientific">Microcystis aeruginosa (strain NIES-843 / IAM M-2473)</name>
    <dbReference type="NCBI Taxonomy" id="449447"/>
    <lineage>
        <taxon>Bacteria</taxon>
        <taxon>Bacillati</taxon>
        <taxon>Cyanobacteriota</taxon>
        <taxon>Cyanophyceae</taxon>
        <taxon>Oscillatoriophycideae</taxon>
        <taxon>Chroococcales</taxon>
        <taxon>Microcystaceae</taxon>
        <taxon>Microcystis</taxon>
    </lineage>
</organism>
<gene>
    <name evidence="1" type="primary">mnmA</name>
    <name type="ordered locus">MAE_48350</name>
</gene>